<protein>
    <recommendedName>
        <fullName evidence="1">Glucosamine-6-phosphate deaminase</fullName>
        <ecNumber evidence="1">3.5.99.6</ecNumber>
    </recommendedName>
    <alternativeName>
        <fullName evidence="1">GlcN6P deaminase</fullName>
        <shortName evidence="1">GNPDA</shortName>
    </alternativeName>
    <alternativeName>
        <fullName evidence="1">Glucosamine-6-phosphate isomerase</fullName>
    </alternativeName>
</protein>
<name>NAGB_SHIDS</name>
<keyword id="KW-0021">Allosteric enzyme</keyword>
<keyword id="KW-0119">Carbohydrate metabolism</keyword>
<keyword id="KW-1015">Disulfide bond</keyword>
<keyword id="KW-0378">Hydrolase</keyword>
<keyword id="KW-1185">Reference proteome</keyword>
<dbReference type="EC" id="3.5.99.6" evidence="1"/>
<dbReference type="EMBL" id="CP000034">
    <property type="protein sequence ID" value="ABB60805.1"/>
    <property type="molecule type" value="Genomic_DNA"/>
</dbReference>
<dbReference type="RefSeq" id="WP_001237084.1">
    <property type="nucleotide sequence ID" value="NC_007606.1"/>
</dbReference>
<dbReference type="RefSeq" id="YP_402294.1">
    <property type="nucleotide sequence ID" value="NC_007606.1"/>
</dbReference>
<dbReference type="SMR" id="Q32IQ2"/>
<dbReference type="STRING" id="300267.SDY_0612"/>
<dbReference type="EnsemblBacteria" id="ABB60805">
    <property type="protein sequence ID" value="ABB60805"/>
    <property type="gene ID" value="SDY_0612"/>
</dbReference>
<dbReference type="KEGG" id="sdy:SDY_0612"/>
<dbReference type="PATRIC" id="fig|300267.13.peg.708"/>
<dbReference type="HOGENOM" id="CLU_049611_0_1_6"/>
<dbReference type="UniPathway" id="UPA00629">
    <property type="reaction ID" value="UER00684"/>
</dbReference>
<dbReference type="Proteomes" id="UP000002716">
    <property type="component" value="Chromosome"/>
</dbReference>
<dbReference type="GO" id="GO:0005829">
    <property type="term" value="C:cytosol"/>
    <property type="evidence" value="ECO:0007669"/>
    <property type="project" value="TreeGrafter"/>
</dbReference>
<dbReference type="GO" id="GO:0004342">
    <property type="term" value="F:glucosamine-6-phosphate deaminase activity"/>
    <property type="evidence" value="ECO:0007669"/>
    <property type="project" value="UniProtKB-UniRule"/>
</dbReference>
<dbReference type="GO" id="GO:0042802">
    <property type="term" value="F:identical protein binding"/>
    <property type="evidence" value="ECO:0007669"/>
    <property type="project" value="TreeGrafter"/>
</dbReference>
<dbReference type="GO" id="GO:0005975">
    <property type="term" value="P:carbohydrate metabolic process"/>
    <property type="evidence" value="ECO:0007669"/>
    <property type="project" value="InterPro"/>
</dbReference>
<dbReference type="GO" id="GO:0006043">
    <property type="term" value="P:glucosamine catabolic process"/>
    <property type="evidence" value="ECO:0007669"/>
    <property type="project" value="TreeGrafter"/>
</dbReference>
<dbReference type="GO" id="GO:0006046">
    <property type="term" value="P:N-acetylglucosamine catabolic process"/>
    <property type="evidence" value="ECO:0007669"/>
    <property type="project" value="TreeGrafter"/>
</dbReference>
<dbReference type="GO" id="GO:0019262">
    <property type="term" value="P:N-acetylneuraminate catabolic process"/>
    <property type="evidence" value="ECO:0007669"/>
    <property type="project" value="UniProtKB-UniRule"/>
</dbReference>
<dbReference type="CDD" id="cd01399">
    <property type="entry name" value="GlcN6P_deaminase"/>
    <property type="match status" value="1"/>
</dbReference>
<dbReference type="FunFam" id="3.40.50.1360:FF:000002">
    <property type="entry name" value="Glucosamine-6-phosphate deaminase"/>
    <property type="match status" value="1"/>
</dbReference>
<dbReference type="Gene3D" id="3.40.50.1360">
    <property type="match status" value="1"/>
</dbReference>
<dbReference type="HAMAP" id="MF_01241">
    <property type="entry name" value="GlcN6P_deamin"/>
    <property type="match status" value="1"/>
</dbReference>
<dbReference type="InterPro" id="IPR006148">
    <property type="entry name" value="Glc/Gal-6P_isomerase"/>
</dbReference>
<dbReference type="InterPro" id="IPR004547">
    <property type="entry name" value="Glucosamine6P_isomerase"/>
</dbReference>
<dbReference type="InterPro" id="IPR018321">
    <property type="entry name" value="Glucosamine6P_isomerase_CS"/>
</dbReference>
<dbReference type="InterPro" id="IPR037171">
    <property type="entry name" value="NagB/RpiA_transferase-like"/>
</dbReference>
<dbReference type="NCBIfam" id="TIGR00502">
    <property type="entry name" value="nagB"/>
    <property type="match status" value="1"/>
</dbReference>
<dbReference type="NCBIfam" id="NF001685">
    <property type="entry name" value="PRK00443.1-5"/>
    <property type="match status" value="1"/>
</dbReference>
<dbReference type="PANTHER" id="PTHR11280">
    <property type="entry name" value="GLUCOSAMINE-6-PHOSPHATE ISOMERASE"/>
    <property type="match status" value="1"/>
</dbReference>
<dbReference type="PANTHER" id="PTHR11280:SF5">
    <property type="entry name" value="GLUCOSAMINE-6-PHOSPHATE ISOMERASE"/>
    <property type="match status" value="1"/>
</dbReference>
<dbReference type="Pfam" id="PF01182">
    <property type="entry name" value="Glucosamine_iso"/>
    <property type="match status" value="1"/>
</dbReference>
<dbReference type="SUPFAM" id="SSF100950">
    <property type="entry name" value="NagB/RpiA/CoA transferase-like"/>
    <property type="match status" value="1"/>
</dbReference>
<dbReference type="PROSITE" id="PS01161">
    <property type="entry name" value="GLC_GALNAC_ISOMERASE"/>
    <property type="match status" value="1"/>
</dbReference>
<reference key="1">
    <citation type="journal article" date="2005" name="Nucleic Acids Res.">
        <title>Genome dynamics and diversity of Shigella species, the etiologic agents of bacillary dysentery.</title>
        <authorList>
            <person name="Yang F."/>
            <person name="Yang J."/>
            <person name="Zhang X."/>
            <person name="Chen L."/>
            <person name="Jiang Y."/>
            <person name="Yan Y."/>
            <person name="Tang X."/>
            <person name="Wang J."/>
            <person name="Xiong Z."/>
            <person name="Dong J."/>
            <person name="Xue Y."/>
            <person name="Zhu Y."/>
            <person name="Xu X."/>
            <person name="Sun L."/>
            <person name="Chen S."/>
            <person name="Nie H."/>
            <person name="Peng J."/>
            <person name="Xu J."/>
            <person name="Wang Y."/>
            <person name="Yuan Z."/>
            <person name="Wen Y."/>
            <person name="Yao Z."/>
            <person name="Shen Y."/>
            <person name="Qiang B."/>
            <person name="Hou Y."/>
            <person name="Yu J."/>
            <person name="Jin Q."/>
        </authorList>
    </citation>
    <scope>NUCLEOTIDE SEQUENCE [LARGE SCALE GENOMIC DNA]</scope>
    <source>
        <strain>Sd197</strain>
    </source>
</reference>
<accession>Q32IQ2</accession>
<sequence length="266" mass="29803">MRLIPLTTAEQVGKWAARHIVNRINAFKPTANRPFVLGLPTGGTPMTTYKALVEMHKAGQVSFKHVITFNMDEYVGLPKEHPESYYSFMHRNFFDHVDIPAENINLLNGNALDIDAECRQYEEKIRSYGKIHLFMGGVGNDGHIAFNEPASSLASRTRIKTLTHDTRVANSRFFDNDVNQVPKYALTVGVGTLLDAEEVMILVLGSQKALALQAAVEGCVNHMWTISCLQLHPKAIMVCDEPSTMELKVKTLRYFNELEAENIKGL</sequence>
<evidence type="ECO:0000255" key="1">
    <source>
        <dbReference type="HAMAP-Rule" id="MF_01241"/>
    </source>
</evidence>
<feature type="chain" id="PRO_1000067019" description="Glucosamine-6-phosphate deaminase">
    <location>
        <begin position="1"/>
        <end position="266"/>
    </location>
</feature>
<feature type="active site" description="Proton acceptor; for enolization step" evidence="1">
    <location>
        <position position="72"/>
    </location>
</feature>
<feature type="active site" description="For ring-opening step" evidence="1">
    <location>
        <position position="141"/>
    </location>
</feature>
<feature type="active site" description="Proton acceptor; for ring-opening step" evidence="1">
    <location>
        <position position="143"/>
    </location>
</feature>
<feature type="active site" description="For ring-opening step" evidence="1">
    <location>
        <position position="148"/>
    </location>
</feature>
<feature type="site" description="Part of the allosteric site" evidence="1">
    <location>
        <position position="151"/>
    </location>
</feature>
<feature type="site" description="Part of the allosteric site" evidence="1">
    <location>
        <position position="158"/>
    </location>
</feature>
<feature type="site" description="Part of the allosteric site" evidence="1">
    <location>
        <position position="160"/>
    </location>
</feature>
<feature type="site" description="Part of the allosteric site" evidence="1">
    <location>
        <position position="161"/>
    </location>
</feature>
<feature type="site" description="Part of the allosteric site" evidence="1">
    <location>
        <position position="254"/>
    </location>
</feature>
<feature type="disulfide bond" description="Interchain" evidence="1">
    <location>
        <position position="219"/>
    </location>
</feature>
<organism>
    <name type="scientific">Shigella dysenteriae serotype 1 (strain Sd197)</name>
    <dbReference type="NCBI Taxonomy" id="300267"/>
    <lineage>
        <taxon>Bacteria</taxon>
        <taxon>Pseudomonadati</taxon>
        <taxon>Pseudomonadota</taxon>
        <taxon>Gammaproteobacteria</taxon>
        <taxon>Enterobacterales</taxon>
        <taxon>Enterobacteriaceae</taxon>
        <taxon>Shigella</taxon>
    </lineage>
</organism>
<proteinExistence type="inferred from homology"/>
<gene>
    <name evidence="1" type="primary">nagB</name>
    <name type="ordered locus">SDY_0612</name>
</gene>
<comment type="function">
    <text evidence="1">Catalyzes the reversible isomerization-deamination of glucosamine 6-phosphate (GlcN6P) to form fructose 6-phosphate (Fru6P) and ammonium ion.</text>
</comment>
<comment type="catalytic activity">
    <reaction evidence="1">
        <text>alpha-D-glucosamine 6-phosphate + H2O = beta-D-fructose 6-phosphate + NH4(+)</text>
        <dbReference type="Rhea" id="RHEA:12172"/>
        <dbReference type="ChEBI" id="CHEBI:15377"/>
        <dbReference type="ChEBI" id="CHEBI:28938"/>
        <dbReference type="ChEBI" id="CHEBI:57634"/>
        <dbReference type="ChEBI" id="CHEBI:75989"/>
        <dbReference type="EC" id="3.5.99.6"/>
    </reaction>
</comment>
<comment type="activity regulation">
    <text evidence="1">Allosterically activated by N-acetylglucosamine 6-phosphate (GlcNAc6P).</text>
</comment>
<comment type="pathway">
    <text evidence="1">Amino-sugar metabolism; N-acetylneuraminate degradation; D-fructose 6-phosphate from N-acetylneuraminate: step 5/5.</text>
</comment>
<comment type="subunit">
    <text evidence="1">Homohexamer; trimer of disulfide-linked dimers.</text>
</comment>
<comment type="similarity">
    <text evidence="1">Belongs to the glucosamine/galactosamine-6-phosphate isomerase family. NagB subfamily.</text>
</comment>